<protein>
    <recommendedName>
        <fullName evidence="2">Phosphate import ATP-binding protein PstB</fullName>
        <ecNumber evidence="2">7.3.2.1</ecNumber>
    </recommendedName>
    <alternativeName>
        <fullName evidence="2">ABC phosphate transporter</fullName>
    </alternativeName>
    <alternativeName>
        <fullName evidence="2">Phosphate-transporting ATPase</fullName>
    </alternativeName>
</protein>
<sequence length="257" mass="29016">MSMVETAPSKIQVRDLNFYYGKFHALKNINLDIAKNQVTAFIGPSGCGKSTLLRTFNKMYSLYPEQRAEGEILLDGDNILTNTQDIALLRAKVGMVFQKPTPFPMSIYDNIAFGVRLFEKLSRADMDERVQWALTKAALWNETKDKLHQSGYSLSGGQQQRLCIARGIAIRPEVLLLDEPCSALDPISTGRIEELITELKQDYTVVIVTHNMQQAARCSDHTAFMYLGELIEFSNTDDLFTKPAKKQTEDYITGRYG</sequence>
<organism>
    <name type="scientific">Salmonella typhi</name>
    <dbReference type="NCBI Taxonomy" id="90370"/>
    <lineage>
        <taxon>Bacteria</taxon>
        <taxon>Pseudomonadati</taxon>
        <taxon>Pseudomonadota</taxon>
        <taxon>Gammaproteobacteria</taxon>
        <taxon>Enterobacterales</taxon>
        <taxon>Enterobacteriaceae</taxon>
        <taxon>Salmonella</taxon>
    </lineage>
</organism>
<reference key="1">
    <citation type="journal article" date="2001" name="Nature">
        <title>Complete genome sequence of a multiple drug resistant Salmonella enterica serovar Typhi CT18.</title>
        <authorList>
            <person name="Parkhill J."/>
            <person name="Dougan G."/>
            <person name="James K.D."/>
            <person name="Thomson N.R."/>
            <person name="Pickard D."/>
            <person name="Wain J."/>
            <person name="Churcher C.M."/>
            <person name="Mungall K.L."/>
            <person name="Bentley S.D."/>
            <person name="Holden M.T.G."/>
            <person name="Sebaihia M."/>
            <person name="Baker S."/>
            <person name="Basham D."/>
            <person name="Brooks K."/>
            <person name="Chillingworth T."/>
            <person name="Connerton P."/>
            <person name="Cronin A."/>
            <person name="Davis P."/>
            <person name="Davies R.M."/>
            <person name="Dowd L."/>
            <person name="White N."/>
            <person name="Farrar J."/>
            <person name="Feltwell T."/>
            <person name="Hamlin N."/>
            <person name="Haque A."/>
            <person name="Hien T.T."/>
            <person name="Holroyd S."/>
            <person name="Jagels K."/>
            <person name="Krogh A."/>
            <person name="Larsen T.S."/>
            <person name="Leather S."/>
            <person name="Moule S."/>
            <person name="O'Gaora P."/>
            <person name="Parry C."/>
            <person name="Quail M.A."/>
            <person name="Rutherford K.M."/>
            <person name="Simmonds M."/>
            <person name="Skelton J."/>
            <person name="Stevens K."/>
            <person name="Whitehead S."/>
            <person name="Barrell B.G."/>
        </authorList>
    </citation>
    <scope>NUCLEOTIDE SEQUENCE [LARGE SCALE GENOMIC DNA]</scope>
    <source>
        <strain>CT18</strain>
    </source>
</reference>
<reference key="2">
    <citation type="journal article" date="2003" name="J. Bacteriol.">
        <title>Comparative genomics of Salmonella enterica serovar Typhi strains Ty2 and CT18.</title>
        <authorList>
            <person name="Deng W."/>
            <person name="Liou S.-R."/>
            <person name="Plunkett G. III"/>
            <person name="Mayhew G.F."/>
            <person name="Rose D.J."/>
            <person name="Burland V."/>
            <person name="Kodoyianni V."/>
            <person name="Schwartz D.C."/>
            <person name="Blattner F.R."/>
        </authorList>
    </citation>
    <scope>NUCLEOTIDE SEQUENCE [LARGE SCALE GENOMIC DNA]</scope>
    <source>
        <strain>ATCC 700931 / Ty2</strain>
    </source>
</reference>
<gene>
    <name evidence="2" type="primary">pstB</name>
    <name type="ordered locus">STY3929</name>
    <name type="ordered locus">t3669</name>
</gene>
<keyword id="KW-0067">ATP-binding</keyword>
<keyword id="KW-0997">Cell inner membrane</keyword>
<keyword id="KW-1003">Cell membrane</keyword>
<keyword id="KW-0472">Membrane</keyword>
<keyword id="KW-0547">Nucleotide-binding</keyword>
<keyword id="KW-0592">Phosphate transport</keyword>
<keyword id="KW-1278">Translocase</keyword>
<keyword id="KW-0813">Transport</keyword>
<accession>P63366</accession>
<accession>P58656</accession>
<accession>P58657</accession>
<proteinExistence type="inferred from homology"/>
<feature type="initiator methionine" description="Removed" evidence="1">
    <location>
        <position position="1"/>
    </location>
</feature>
<feature type="chain" id="PRO_0000092872" description="Phosphate import ATP-binding protein PstB">
    <location>
        <begin position="2"/>
        <end position="257"/>
    </location>
</feature>
<feature type="domain" description="ABC transporter" evidence="2">
    <location>
        <begin position="11"/>
        <end position="252"/>
    </location>
</feature>
<feature type="binding site" evidence="2">
    <location>
        <begin position="43"/>
        <end position="50"/>
    </location>
    <ligand>
        <name>ATP</name>
        <dbReference type="ChEBI" id="CHEBI:30616"/>
    </ligand>
</feature>
<dbReference type="EC" id="7.3.2.1" evidence="2"/>
<dbReference type="EMBL" id="AL513382">
    <property type="protein sequence ID" value="CAD03145.1"/>
    <property type="molecule type" value="Genomic_DNA"/>
</dbReference>
<dbReference type="EMBL" id="AE014613">
    <property type="protein sequence ID" value="AAO71165.1"/>
    <property type="molecule type" value="Genomic_DNA"/>
</dbReference>
<dbReference type="RefSeq" id="NP_458092.1">
    <property type="nucleotide sequence ID" value="NC_003198.1"/>
</dbReference>
<dbReference type="RefSeq" id="WP_000063118.1">
    <property type="nucleotide sequence ID" value="NZ_WSUR01000023.1"/>
</dbReference>
<dbReference type="SMR" id="P63366"/>
<dbReference type="STRING" id="220341.gene:17587788"/>
<dbReference type="GeneID" id="66758143"/>
<dbReference type="KEGG" id="stt:t3669"/>
<dbReference type="KEGG" id="sty:STY3929"/>
<dbReference type="PATRIC" id="fig|220341.7.peg.4009"/>
<dbReference type="eggNOG" id="COG1117">
    <property type="taxonomic scope" value="Bacteria"/>
</dbReference>
<dbReference type="HOGENOM" id="CLU_000604_1_22_6"/>
<dbReference type="OMA" id="TMSIYEN"/>
<dbReference type="OrthoDB" id="9802264at2"/>
<dbReference type="Proteomes" id="UP000000541">
    <property type="component" value="Chromosome"/>
</dbReference>
<dbReference type="Proteomes" id="UP000002670">
    <property type="component" value="Chromosome"/>
</dbReference>
<dbReference type="GO" id="GO:0005886">
    <property type="term" value="C:plasma membrane"/>
    <property type="evidence" value="ECO:0007669"/>
    <property type="project" value="UniProtKB-SubCell"/>
</dbReference>
<dbReference type="GO" id="GO:0005524">
    <property type="term" value="F:ATP binding"/>
    <property type="evidence" value="ECO:0007669"/>
    <property type="project" value="UniProtKB-KW"/>
</dbReference>
<dbReference type="GO" id="GO:0016887">
    <property type="term" value="F:ATP hydrolysis activity"/>
    <property type="evidence" value="ECO:0007669"/>
    <property type="project" value="InterPro"/>
</dbReference>
<dbReference type="GO" id="GO:0015415">
    <property type="term" value="F:ATPase-coupled phosphate ion transmembrane transporter activity"/>
    <property type="evidence" value="ECO:0007669"/>
    <property type="project" value="UniProtKB-EC"/>
</dbReference>
<dbReference type="GO" id="GO:0035435">
    <property type="term" value="P:phosphate ion transmembrane transport"/>
    <property type="evidence" value="ECO:0007669"/>
    <property type="project" value="InterPro"/>
</dbReference>
<dbReference type="CDD" id="cd03260">
    <property type="entry name" value="ABC_PstB_phosphate_transporter"/>
    <property type="match status" value="1"/>
</dbReference>
<dbReference type="FunFam" id="3.40.50.300:FF:000132">
    <property type="entry name" value="Phosphate import ATP-binding protein PstB"/>
    <property type="match status" value="1"/>
</dbReference>
<dbReference type="Gene3D" id="3.40.50.300">
    <property type="entry name" value="P-loop containing nucleotide triphosphate hydrolases"/>
    <property type="match status" value="1"/>
</dbReference>
<dbReference type="InterPro" id="IPR003593">
    <property type="entry name" value="AAA+_ATPase"/>
</dbReference>
<dbReference type="InterPro" id="IPR003439">
    <property type="entry name" value="ABC_transporter-like_ATP-bd"/>
</dbReference>
<dbReference type="InterPro" id="IPR017871">
    <property type="entry name" value="ABC_transporter-like_CS"/>
</dbReference>
<dbReference type="InterPro" id="IPR027417">
    <property type="entry name" value="P-loop_NTPase"/>
</dbReference>
<dbReference type="InterPro" id="IPR005670">
    <property type="entry name" value="PstB-like"/>
</dbReference>
<dbReference type="NCBIfam" id="TIGR00972">
    <property type="entry name" value="3a0107s01c2"/>
    <property type="match status" value="1"/>
</dbReference>
<dbReference type="PANTHER" id="PTHR43423">
    <property type="entry name" value="ABC TRANSPORTER I FAMILY MEMBER 17"/>
    <property type="match status" value="1"/>
</dbReference>
<dbReference type="PANTHER" id="PTHR43423:SF3">
    <property type="entry name" value="PHOSPHATE IMPORT ATP-BINDING PROTEIN PSTB"/>
    <property type="match status" value="1"/>
</dbReference>
<dbReference type="Pfam" id="PF00005">
    <property type="entry name" value="ABC_tran"/>
    <property type="match status" value="1"/>
</dbReference>
<dbReference type="SMART" id="SM00382">
    <property type="entry name" value="AAA"/>
    <property type="match status" value="1"/>
</dbReference>
<dbReference type="SUPFAM" id="SSF52540">
    <property type="entry name" value="P-loop containing nucleoside triphosphate hydrolases"/>
    <property type="match status" value="1"/>
</dbReference>
<dbReference type="PROSITE" id="PS00211">
    <property type="entry name" value="ABC_TRANSPORTER_1"/>
    <property type="match status" value="1"/>
</dbReference>
<dbReference type="PROSITE" id="PS50893">
    <property type="entry name" value="ABC_TRANSPORTER_2"/>
    <property type="match status" value="1"/>
</dbReference>
<dbReference type="PROSITE" id="PS51238">
    <property type="entry name" value="PSTB"/>
    <property type="match status" value="1"/>
</dbReference>
<evidence type="ECO:0000250" key="1"/>
<evidence type="ECO:0000255" key="2">
    <source>
        <dbReference type="HAMAP-Rule" id="MF_01702"/>
    </source>
</evidence>
<name>PSTB_SALTI</name>
<comment type="function">
    <text evidence="2">Part of the ABC transporter complex PstSACB involved in phosphate import. Responsible for energy coupling to the transport system.</text>
</comment>
<comment type="catalytic activity">
    <reaction evidence="2">
        <text>phosphate(out) + ATP + H2O = ADP + 2 phosphate(in) + H(+)</text>
        <dbReference type="Rhea" id="RHEA:24440"/>
        <dbReference type="ChEBI" id="CHEBI:15377"/>
        <dbReference type="ChEBI" id="CHEBI:15378"/>
        <dbReference type="ChEBI" id="CHEBI:30616"/>
        <dbReference type="ChEBI" id="CHEBI:43474"/>
        <dbReference type="ChEBI" id="CHEBI:456216"/>
        <dbReference type="EC" id="7.3.2.1"/>
    </reaction>
</comment>
<comment type="subunit">
    <text evidence="2">The complex is composed of two ATP-binding proteins (PstB), two transmembrane proteins (PstC and PstA) and a solute-binding protein (PstS).</text>
</comment>
<comment type="subcellular location">
    <subcellularLocation>
        <location evidence="2">Cell inner membrane</location>
        <topology evidence="2">Peripheral membrane protein</topology>
    </subcellularLocation>
</comment>
<comment type="similarity">
    <text evidence="2">Belongs to the ABC transporter superfamily. Phosphate importer (TC 3.A.1.7) family.</text>
</comment>